<protein>
    <recommendedName>
        <fullName evidence="8">DNA ligase 4</fullName>
        <ecNumber evidence="5">6.5.1.1</ecNumber>
    </recommendedName>
    <alternativeName>
        <fullName evidence="7">DNA ligase IV</fullName>
    </alternativeName>
    <alternativeName>
        <fullName>Polydeoxyribonucleotide synthase [ATP] 4</fullName>
    </alternativeName>
</protein>
<accession>Q8BTF7</accession>
<accession>G3UWC4</accession>
<accession>Q3UG76</accession>
<evidence type="ECO:0000250" key="1">
    <source>
        <dbReference type="UniProtKB" id="P18858"/>
    </source>
</evidence>
<evidence type="ECO:0000250" key="2">
    <source>
        <dbReference type="UniProtKB" id="P49917"/>
    </source>
</evidence>
<evidence type="ECO:0000255" key="3"/>
<evidence type="ECO:0000255" key="4">
    <source>
        <dbReference type="PROSITE-ProRule" id="PRU00033"/>
    </source>
</evidence>
<evidence type="ECO:0000255" key="5">
    <source>
        <dbReference type="PROSITE-ProRule" id="PRU10135"/>
    </source>
</evidence>
<evidence type="ECO:0000269" key="6">
    <source>
    </source>
</evidence>
<evidence type="ECO:0000303" key="7">
    <source>
    </source>
</evidence>
<evidence type="ECO:0000305" key="8"/>
<evidence type="ECO:0000312" key="9">
    <source>
        <dbReference type="MGI" id="MGI:1335098"/>
    </source>
</evidence>
<name>DNLI4_MOUSE</name>
<feature type="chain" id="PRO_0000059577" description="DNA ligase 4">
    <location>
        <begin position="1"/>
        <end position="911"/>
    </location>
</feature>
<feature type="domain" description="BRCT 1" evidence="4">
    <location>
        <begin position="654"/>
        <end position="743"/>
    </location>
</feature>
<feature type="domain" description="BRCT 2" evidence="4">
    <location>
        <begin position="808"/>
        <end position="911"/>
    </location>
</feature>
<feature type="region of interest" description="Required for catalytic activity" evidence="2">
    <location>
        <begin position="610"/>
        <end position="620"/>
    </location>
</feature>
<feature type="active site" description="N6-AMP-lysine intermediate" evidence="5">
    <location>
        <position position="273"/>
    </location>
</feature>
<feature type="binding site" evidence="2">
    <location>
        <position position="271"/>
    </location>
    <ligand>
        <name>ATP</name>
        <dbReference type="ChEBI" id="CHEBI:30616"/>
    </ligand>
</feature>
<feature type="binding site" evidence="2">
    <location>
        <position position="272"/>
    </location>
    <ligand>
        <name>ATP</name>
        <dbReference type="ChEBI" id="CHEBI:30616"/>
    </ligand>
</feature>
<feature type="binding site" evidence="2">
    <location>
        <position position="273"/>
    </location>
    <ligand>
        <name>ATP</name>
        <dbReference type="ChEBI" id="CHEBI:30616"/>
    </ligand>
</feature>
<feature type="binding site" evidence="2">
    <location>
        <position position="274"/>
    </location>
    <ligand>
        <name>ATP</name>
        <dbReference type="ChEBI" id="CHEBI:30616"/>
    </ligand>
</feature>
<feature type="binding site" evidence="1">
    <location>
        <position position="278"/>
    </location>
    <ligand>
        <name>ATP</name>
        <dbReference type="ChEBI" id="CHEBI:30616"/>
    </ligand>
</feature>
<feature type="binding site" evidence="1">
    <location>
        <position position="331"/>
    </location>
    <ligand>
        <name>ATP</name>
        <dbReference type="ChEBI" id="CHEBI:30616"/>
    </ligand>
</feature>
<feature type="binding site" evidence="3">
    <location>
        <position position="331"/>
    </location>
    <ligand>
        <name>Mg(2+)</name>
        <dbReference type="ChEBI" id="CHEBI:18420"/>
        <label>1</label>
    </ligand>
</feature>
<feature type="binding site" evidence="2">
    <location>
        <position position="345"/>
    </location>
    <ligand>
        <name>ATP</name>
        <dbReference type="ChEBI" id="CHEBI:30616"/>
    </ligand>
</feature>
<feature type="binding site" evidence="2">
    <location>
        <position position="367"/>
    </location>
    <ligand>
        <name>ATP</name>
        <dbReference type="ChEBI" id="CHEBI:30616"/>
    </ligand>
</feature>
<feature type="binding site" evidence="2">
    <location>
        <position position="427"/>
    </location>
    <ligand>
        <name>ATP</name>
        <dbReference type="ChEBI" id="CHEBI:30616"/>
    </ligand>
</feature>
<feature type="binding site" evidence="3">
    <location>
        <position position="427"/>
    </location>
    <ligand>
        <name>Mg(2+)</name>
        <dbReference type="ChEBI" id="CHEBI:18420"/>
        <label>2</label>
    </ligand>
</feature>
<feature type="binding site" evidence="1">
    <location>
        <position position="432"/>
    </location>
    <ligand>
        <name>ATP</name>
        <dbReference type="ChEBI" id="CHEBI:30616"/>
    </ligand>
</feature>
<feature type="binding site" evidence="1">
    <location>
        <position position="449"/>
    </location>
    <ligand>
        <name>ATP</name>
        <dbReference type="ChEBI" id="CHEBI:30616"/>
    </ligand>
</feature>
<feature type="binding site" evidence="2">
    <location>
        <position position="451"/>
    </location>
    <ligand>
        <name>ATP</name>
        <dbReference type="ChEBI" id="CHEBI:30616"/>
    </ligand>
</feature>
<feature type="sequence conflict" description="In Ref. 1; BAC26747." evidence="8" ref="1">
    <original>F</original>
    <variation>L</variation>
    <location>
        <position position="268"/>
    </location>
</feature>
<feature type="sequence conflict" description="In Ref. 1; BAE28333." evidence="8" ref="1">
    <original>Y</original>
    <variation>C</variation>
    <location>
        <position position="758"/>
    </location>
</feature>
<sequence length="911" mass="104120">MASSQTSQTVAAHVPFADLCSTLERIQKGKDRAEKIRHFKEFLDSWRKFHDALHKNRKDVTDSFYPAMRLILPQLERERMAYGIKETMLAKLYIELLNLPREGKDAQKLLNYRTPSGARTDAGDFAMIAYFVLKPRCLQKGSLTIQQVNELLDLVASNNSGKKKDLVKKSLLQLITQSSALEQKWLIRMIIKDLKLGISQQTIFSIFHNDAVELHNVTTDLEKVCRQLHDPSVGLSDISITLFSAFKPMLAAVADVERVEKDMKQQSFYIETKLDGERMQMHKDGALYRYFSRNGYNYTDQFGESPQEGSLTPFIHNAFGTDVQACILDGEMMAYNPTTQTFMQKGVKFDIKRMVEDSGLQTCYSVFDVLMVNKKKLGRETLRKRYEILSSTFTPIQGRIEIVQKTQAHTKKEVVDALNDAIDKREEGIMVKHPLSIYKPDKRGEGWLKIKPEYVSGLMDELDVLIVGGYWGKGSRGGMMSHFLCAVAETPPPGDRPSVFHTLCRVGSGYTMKELYDLGLKLAKYWKPFHKKSPPSSILCGTEKPEVYIEPQNSVIVQIKAAEIVPSDMYKTGSTLRFPRIEKIRDDKEWHECMTLGDLEQLRGKASGKLATKHLHVGDDDEPREKRRKPISKTKKAIRIIEHLKAPNLSNVNKVSNVFEDVEFCVMSGLDGYPKADLENRIAEFGGYIVQNPGPDTYCVIAGSENVRVKNIISSDKNDVVKPEWLLECFKTKTCVPWQPRFMIHMCPSTKQHFAREYDCYGDSYFVDTDLDQLKEVFLGIKPSEQQTPEEMAPVIADLECRYSWDHSPLSMFRHYTIYLDLYAVINDLSSRIEATRLGITALELRFHGAKVVSCLSEGVSHVIIGEDQRRVTDFKIFRRMLKKKFKILQESWVSDSVDKGELQEENQYLL</sequence>
<dbReference type="EC" id="6.5.1.1" evidence="5"/>
<dbReference type="EMBL" id="AK030029">
    <property type="protein sequence ID" value="BAC26747.1"/>
    <property type="molecule type" value="mRNA"/>
</dbReference>
<dbReference type="EMBL" id="AK148081">
    <property type="protein sequence ID" value="BAE28333.1"/>
    <property type="molecule type" value="mRNA"/>
</dbReference>
<dbReference type="EMBL" id="AC138397">
    <property type="status" value="NOT_ANNOTATED_CDS"/>
    <property type="molecule type" value="Genomic_DNA"/>
</dbReference>
<dbReference type="EMBL" id="CH466566">
    <property type="protein sequence ID" value="EDL22038.1"/>
    <property type="molecule type" value="Genomic_DNA"/>
</dbReference>
<dbReference type="EMBL" id="CH466566">
    <property type="protein sequence ID" value="EDL22040.1"/>
    <property type="molecule type" value="Genomic_DNA"/>
</dbReference>
<dbReference type="CCDS" id="CCDS22092.1"/>
<dbReference type="RefSeq" id="NP_001363971.1">
    <property type="nucleotide sequence ID" value="NM_001377042.1"/>
</dbReference>
<dbReference type="RefSeq" id="NP_795927.2">
    <property type="nucleotide sequence ID" value="NM_176953.4"/>
</dbReference>
<dbReference type="RefSeq" id="XP_017168343.1">
    <property type="nucleotide sequence ID" value="XM_017312854.1"/>
</dbReference>
<dbReference type="SMR" id="Q8BTF7"/>
<dbReference type="BioGRID" id="235376">
    <property type="interactions" value="2"/>
</dbReference>
<dbReference type="CORUM" id="Q8BTF7"/>
<dbReference type="FunCoup" id="Q8BTF7">
    <property type="interactions" value="2314"/>
</dbReference>
<dbReference type="STRING" id="10090.ENSMUSP00000093130"/>
<dbReference type="iPTMnet" id="Q8BTF7"/>
<dbReference type="PhosphoSitePlus" id="Q8BTF7"/>
<dbReference type="PaxDb" id="10090-ENSMUSP00000093130"/>
<dbReference type="ProteomicsDB" id="279793"/>
<dbReference type="Pumba" id="Q8BTF7"/>
<dbReference type="Antibodypedia" id="705">
    <property type="antibodies" value="326 antibodies from 32 providers"/>
</dbReference>
<dbReference type="DNASU" id="319583"/>
<dbReference type="Ensembl" id="ENSMUST00000095476.6">
    <property type="protein sequence ID" value="ENSMUSP00000093130.5"/>
    <property type="gene ID" value="ENSMUSG00000049717.10"/>
</dbReference>
<dbReference type="Ensembl" id="ENSMUST00000170033.2">
    <property type="protein sequence ID" value="ENSMUSP00000130807.2"/>
    <property type="gene ID" value="ENSMUSG00000049717.10"/>
</dbReference>
<dbReference type="GeneID" id="319583"/>
<dbReference type="KEGG" id="mmu:319583"/>
<dbReference type="UCSC" id="uc009kul.1">
    <property type="organism name" value="mouse"/>
</dbReference>
<dbReference type="AGR" id="MGI:1335098"/>
<dbReference type="CTD" id="3981"/>
<dbReference type="MGI" id="MGI:1335098">
    <property type="gene designation" value="Lig4"/>
</dbReference>
<dbReference type="VEuPathDB" id="HostDB:ENSMUSG00000049717"/>
<dbReference type="eggNOG" id="KOG0966">
    <property type="taxonomic scope" value="Eukaryota"/>
</dbReference>
<dbReference type="GeneTree" id="ENSGT00860000133881"/>
<dbReference type="HOGENOM" id="CLU_004844_2_0_1"/>
<dbReference type="InParanoid" id="Q8BTF7"/>
<dbReference type="OMA" id="EGIMIKH"/>
<dbReference type="OrthoDB" id="151490at2759"/>
<dbReference type="PhylomeDB" id="Q8BTF7"/>
<dbReference type="TreeFam" id="TF312980"/>
<dbReference type="Reactome" id="R-MMU-5693571">
    <property type="pathway name" value="Nonhomologous End-Joining (NHEJ)"/>
</dbReference>
<dbReference type="BioGRID-ORCS" id="319583">
    <property type="hits" value="39 hits in 114 CRISPR screens"/>
</dbReference>
<dbReference type="PRO" id="PR:Q8BTF7"/>
<dbReference type="Proteomes" id="UP000000589">
    <property type="component" value="Chromosome 8"/>
</dbReference>
<dbReference type="RNAct" id="Q8BTF7">
    <property type="molecule type" value="protein"/>
</dbReference>
<dbReference type="Bgee" id="ENSMUSG00000049717">
    <property type="expression patterns" value="Expressed in primary oocyte and 224 other cell types or tissues"/>
</dbReference>
<dbReference type="GO" id="GO:0000793">
    <property type="term" value="C:condensed chromosome"/>
    <property type="evidence" value="ECO:0007669"/>
    <property type="project" value="Ensembl"/>
</dbReference>
<dbReference type="GO" id="GO:0032807">
    <property type="term" value="C:DNA ligase IV complex"/>
    <property type="evidence" value="ECO:0007669"/>
    <property type="project" value="Ensembl"/>
</dbReference>
<dbReference type="GO" id="GO:0005958">
    <property type="term" value="C:DNA-dependent protein kinase-DNA ligase 4 complex"/>
    <property type="evidence" value="ECO:0000314"/>
    <property type="project" value="MGI"/>
</dbReference>
<dbReference type="GO" id="GO:0070419">
    <property type="term" value="C:nonhomologous end joining complex"/>
    <property type="evidence" value="ECO:0000250"/>
    <property type="project" value="UniProtKB"/>
</dbReference>
<dbReference type="GO" id="GO:0005654">
    <property type="term" value="C:nucleoplasm"/>
    <property type="evidence" value="ECO:0007669"/>
    <property type="project" value="Ensembl"/>
</dbReference>
<dbReference type="GO" id="GO:0005524">
    <property type="term" value="F:ATP binding"/>
    <property type="evidence" value="ECO:0000314"/>
    <property type="project" value="MGI"/>
</dbReference>
<dbReference type="GO" id="GO:0003677">
    <property type="term" value="F:DNA binding"/>
    <property type="evidence" value="ECO:0007669"/>
    <property type="project" value="Ensembl"/>
</dbReference>
<dbReference type="GO" id="GO:0003910">
    <property type="term" value="F:DNA ligase (ATP) activity"/>
    <property type="evidence" value="ECO:0000314"/>
    <property type="project" value="MGI"/>
</dbReference>
<dbReference type="GO" id="GO:0000287">
    <property type="term" value="F:magnesium ion binding"/>
    <property type="evidence" value="ECO:0007669"/>
    <property type="project" value="Ensembl"/>
</dbReference>
<dbReference type="GO" id="GO:0006284">
    <property type="term" value="P:base-excision repair"/>
    <property type="evidence" value="ECO:0007669"/>
    <property type="project" value="Ensembl"/>
</dbReference>
<dbReference type="GO" id="GO:0051301">
    <property type="term" value="P:cell division"/>
    <property type="evidence" value="ECO:0007669"/>
    <property type="project" value="UniProtKB-KW"/>
</dbReference>
<dbReference type="GO" id="GO:0071479">
    <property type="term" value="P:cellular response to ionizing radiation"/>
    <property type="evidence" value="ECO:0007669"/>
    <property type="project" value="Ensembl"/>
</dbReference>
<dbReference type="GO" id="GO:0071285">
    <property type="term" value="P:cellular response to lithium ion"/>
    <property type="evidence" value="ECO:0007669"/>
    <property type="project" value="Ensembl"/>
</dbReference>
<dbReference type="GO" id="GO:0007417">
    <property type="term" value="P:central nervous system development"/>
    <property type="evidence" value="ECO:0000315"/>
    <property type="project" value="MGI"/>
</dbReference>
<dbReference type="GO" id="GO:0051276">
    <property type="term" value="P:chromosome organization"/>
    <property type="evidence" value="ECO:0000316"/>
    <property type="project" value="MGI"/>
</dbReference>
<dbReference type="GO" id="GO:1904155">
    <property type="term" value="P:DN2 thymocyte differentiation"/>
    <property type="evidence" value="ECO:0000315"/>
    <property type="project" value="MGI"/>
</dbReference>
<dbReference type="GO" id="GO:0071897">
    <property type="term" value="P:DNA biosynthetic process"/>
    <property type="evidence" value="ECO:0007669"/>
    <property type="project" value="InterPro"/>
</dbReference>
<dbReference type="GO" id="GO:0006281">
    <property type="term" value="P:DNA repair"/>
    <property type="evidence" value="ECO:0000315"/>
    <property type="project" value="MGI"/>
</dbReference>
<dbReference type="GO" id="GO:0006302">
    <property type="term" value="P:double-strand break repair"/>
    <property type="evidence" value="ECO:0000315"/>
    <property type="project" value="MGI"/>
</dbReference>
<dbReference type="GO" id="GO:0097680">
    <property type="term" value="P:double-strand break repair via classical nonhomologous end joining"/>
    <property type="evidence" value="ECO:0007669"/>
    <property type="project" value="Ensembl"/>
</dbReference>
<dbReference type="GO" id="GO:0006303">
    <property type="term" value="P:double-strand break repair via nonhomologous end joining"/>
    <property type="evidence" value="ECO:0000315"/>
    <property type="project" value="BHF-UCL"/>
</dbReference>
<dbReference type="GO" id="GO:0048144">
    <property type="term" value="P:fibroblast proliferation"/>
    <property type="evidence" value="ECO:0000315"/>
    <property type="project" value="MGI"/>
</dbReference>
<dbReference type="GO" id="GO:0033152">
    <property type="term" value="P:immunoglobulin V(D)J recombination"/>
    <property type="evidence" value="ECO:0000315"/>
    <property type="project" value="MGI"/>
</dbReference>
<dbReference type="GO" id="GO:0001701">
    <property type="term" value="P:in utero embryonic development"/>
    <property type="evidence" value="ECO:0000315"/>
    <property type="project" value="MGI"/>
</dbReference>
<dbReference type="GO" id="GO:0045190">
    <property type="term" value="P:isotype switching"/>
    <property type="evidence" value="ECO:0000315"/>
    <property type="project" value="MGI"/>
</dbReference>
<dbReference type="GO" id="GO:0043524">
    <property type="term" value="P:negative regulation of neuron apoptotic process"/>
    <property type="evidence" value="ECO:0000315"/>
    <property type="project" value="MGI"/>
</dbReference>
<dbReference type="GO" id="GO:0022008">
    <property type="term" value="P:neurogenesis"/>
    <property type="evidence" value="ECO:0000315"/>
    <property type="project" value="MGI"/>
</dbReference>
<dbReference type="GO" id="GO:0051402">
    <property type="term" value="P:neuron apoptotic process"/>
    <property type="evidence" value="ECO:0000315"/>
    <property type="project" value="MGI"/>
</dbReference>
<dbReference type="GO" id="GO:0006297">
    <property type="term" value="P:nucleotide-excision repair, DNA gap filling"/>
    <property type="evidence" value="ECO:0007669"/>
    <property type="project" value="Ensembl"/>
</dbReference>
<dbReference type="GO" id="GO:2001252">
    <property type="term" value="P:positive regulation of chromosome organization"/>
    <property type="evidence" value="ECO:0007669"/>
    <property type="project" value="Ensembl"/>
</dbReference>
<dbReference type="GO" id="GO:0048146">
    <property type="term" value="P:positive regulation of fibroblast proliferation"/>
    <property type="evidence" value="ECO:0000315"/>
    <property type="project" value="MGI"/>
</dbReference>
<dbReference type="GO" id="GO:0050769">
    <property type="term" value="P:positive regulation of neurogenesis"/>
    <property type="evidence" value="ECO:0000315"/>
    <property type="project" value="MGI"/>
</dbReference>
<dbReference type="GO" id="GO:0002328">
    <property type="term" value="P:pro-B cell differentiation"/>
    <property type="evidence" value="ECO:0000315"/>
    <property type="project" value="MGI"/>
</dbReference>
<dbReference type="GO" id="GO:0010332">
    <property type="term" value="P:response to gamma radiation"/>
    <property type="evidence" value="ECO:0000315"/>
    <property type="project" value="MGI"/>
</dbReference>
<dbReference type="GO" id="GO:0010212">
    <property type="term" value="P:response to ionizing radiation"/>
    <property type="evidence" value="ECO:0000315"/>
    <property type="project" value="MGI"/>
</dbReference>
<dbReference type="GO" id="GO:0010165">
    <property type="term" value="P:response to X-ray"/>
    <property type="evidence" value="ECO:0007669"/>
    <property type="project" value="Ensembl"/>
</dbReference>
<dbReference type="GO" id="GO:0000012">
    <property type="term" value="P:single strand break repair"/>
    <property type="evidence" value="ECO:0007669"/>
    <property type="project" value="Ensembl"/>
</dbReference>
<dbReference type="GO" id="GO:0035019">
    <property type="term" value="P:somatic stem cell population maintenance"/>
    <property type="evidence" value="ECO:0000315"/>
    <property type="project" value="MGI"/>
</dbReference>
<dbReference type="GO" id="GO:0072089">
    <property type="term" value="P:stem cell proliferation"/>
    <property type="evidence" value="ECO:0000315"/>
    <property type="project" value="MGI"/>
</dbReference>
<dbReference type="GO" id="GO:0033153">
    <property type="term" value="P:T cell receptor V(D)J recombination"/>
    <property type="evidence" value="ECO:0000315"/>
    <property type="project" value="MGI"/>
</dbReference>
<dbReference type="GO" id="GO:0033151">
    <property type="term" value="P:V(D)J recombination"/>
    <property type="evidence" value="ECO:0000314"/>
    <property type="project" value="MGI"/>
</dbReference>
<dbReference type="CDD" id="cd07903">
    <property type="entry name" value="Adenylation_DNA_ligase_IV"/>
    <property type="match status" value="1"/>
</dbReference>
<dbReference type="CDD" id="cd17722">
    <property type="entry name" value="BRCT_DNA_ligase_IV_rpt1"/>
    <property type="match status" value="1"/>
</dbReference>
<dbReference type="CDD" id="cd17717">
    <property type="entry name" value="BRCT_DNA_ligase_IV_rpt2"/>
    <property type="match status" value="1"/>
</dbReference>
<dbReference type="CDD" id="cd07968">
    <property type="entry name" value="OBF_DNA_ligase_IV"/>
    <property type="match status" value="1"/>
</dbReference>
<dbReference type="FunFam" id="1.10.3260.10:FF:000003">
    <property type="entry name" value="DNA ligase"/>
    <property type="match status" value="1"/>
</dbReference>
<dbReference type="FunFam" id="2.40.50.140:FF:000150">
    <property type="entry name" value="DNA ligase"/>
    <property type="match status" value="1"/>
</dbReference>
<dbReference type="FunFam" id="3.30.470.30:FF:000008">
    <property type="entry name" value="DNA ligase"/>
    <property type="match status" value="1"/>
</dbReference>
<dbReference type="FunFam" id="3.40.50.10190:FF:000027">
    <property type="entry name" value="DNA ligase"/>
    <property type="match status" value="1"/>
</dbReference>
<dbReference type="FunFam" id="3.40.50.10190:FF:000050">
    <property type="entry name" value="DNA ligase"/>
    <property type="match status" value="1"/>
</dbReference>
<dbReference type="Gene3D" id="6.10.250.520">
    <property type="match status" value="1"/>
</dbReference>
<dbReference type="Gene3D" id="3.40.50.10190">
    <property type="entry name" value="BRCT domain"/>
    <property type="match status" value="2"/>
</dbReference>
<dbReference type="Gene3D" id="1.10.3260.10">
    <property type="entry name" value="DNA ligase, ATP-dependent, N-terminal domain"/>
    <property type="match status" value="1"/>
</dbReference>
<dbReference type="Gene3D" id="3.30.470.30">
    <property type="entry name" value="DNA ligase/mRNA capping enzyme"/>
    <property type="match status" value="1"/>
</dbReference>
<dbReference type="Gene3D" id="2.40.50.140">
    <property type="entry name" value="Nucleic acid-binding proteins"/>
    <property type="match status" value="1"/>
</dbReference>
<dbReference type="InterPro" id="IPR044125">
    <property type="entry name" value="Adenylation_DNA_ligase_IV"/>
</dbReference>
<dbReference type="InterPro" id="IPR001357">
    <property type="entry name" value="BRCT_dom"/>
</dbReference>
<dbReference type="InterPro" id="IPR036420">
    <property type="entry name" value="BRCT_dom_sf"/>
</dbReference>
<dbReference type="InterPro" id="IPR000977">
    <property type="entry name" value="DNA_ligase_ATP-dep"/>
</dbReference>
<dbReference type="InterPro" id="IPR012309">
    <property type="entry name" value="DNA_ligase_ATP-dep_C"/>
</dbReference>
<dbReference type="InterPro" id="IPR012310">
    <property type="entry name" value="DNA_ligase_ATP-dep_cent"/>
</dbReference>
<dbReference type="InterPro" id="IPR016059">
    <property type="entry name" value="DNA_ligase_ATP-dep_CS"/>
</dbReference>
<dbReference type="InterPro" id="IPR012308">
    <property type="entry name" value="DNA_ligase_ATP-dep_N"/>
</dbReference>
<dbReference type="InterPro" id="IPR021536">
    <property type="entry name" value="DNA_ligase_IV_dom"/>
</dbReference>
<dbReference type="InterPro" id="IPR036599">
    <property type="entry name" value="DNA_ligase_N_sf"/>
</dbReference>
<dbReference type="InterPro" id="IPR029710">
    <property type="entry name" value="LIG4"/>
</dbReference>
<dbReference type="InterPro" id="IPR012340">
    <property type="entry name" value="NA-bd_OB-fold"/>
</dbReference>
<dbReference type="NCBIfam" id="TIGR00574">
    <property type="entry name" value="dnl1"/>
    <property type="match status" value="1"/>
</dbReference>
<dbReference type="PANTHER" id="PTHR45997">
    <property type="entry name" value="DNA LIGASE 4"/>
    <property type="match status" value="1"/>
</dbReference>
<dbReference type="PANTHER" id="PTHR45997:SF1">
    <property type="entry name" value="DNA LIGASE 4"/>
    <property type="match status" value="1"/>
</dbReference>
<dbReference type="Pfam" id="PF00533">
    <property type="entry name" value="BRCT"/>
    <property type="match status" value="2"/>
</dbReference>
<dbReference type="Pfam" id="PF04679">
    <property type="entry name" value="DNA_ligase_A_C"/>
    <property type="match status" value="1"/>
</dbReference>
<dbReference type="Pfam" id="PF01068">
    <property type="entry name" value="DNA_ligase_A_M"/>
    <property type="match status" value="1"/>
</dbReference>
<dbReference type="Pfam" id="PF04675">
    <property type="entry name" value="DNA_ligase_A_N"/>
    <property type="match status" value="1"/>
</dbReference>
<dbReference type="Pfam" id="PF11411">
    <property type="entry name" value="DNA_ligase_IV"/>
    <property type="match status" value="1"/>
</dbReference>
<dbReference type="SMART" id="SM00292">
    <property type="entry name" value="BRCT"/>
    <property type="match status" value="2"/>
</dbReference>
<dbReference type="SUPFAM" id="SSF117018">
    <property type="entry name" value="ATP-dependent DNA ligase DNA-binding domain"/>
    <property type="match status" value="1"/>
</dbReference>
<dbReference type="SUPFAM" id="SSF52113">
    <property type="entry name" value="BRCT domain"/>
    <property type="match status" value="2"/>
</dbReference>
<dbReference type="SUPFAM" id="SSF56091">
    <property type="entry name" value="DNA ligase/mRNA capping enzyme, catalytic domain"/>
    <property type="match status" value="1"/>
</dbReference>
<dbReference type="SUPFAM" id="SSF50249">
    <property type="entry name" value="Nucleic acid-binding proteins"/>
    <property type="match status" value="1"/>
</dbReference>
<dbReference type="PROSITE" id="PS50172">
    <property type="entry name" value="BRCT"/>
    <property type="match status" value="2"/>
</dbReference>
<dbReference type="PROSITE" id="PS00697">
    <property type="entry name" value="DNA_LIGASE_A1"/>
    <property type="match status" value="1"/>
</dbReference>
<dbReference type="PROSITE" id="PS00333">
    <property type="entry name" value="DNA_LIGASE_A2"/>
    <property type="match status" value="1"/>
</dbReference>
<dbReference type="PROSITE" id="PS50160">
    <property type="entry name" value="DNA_LIGASE_A3"/>
    <property type="match status" value="1"/>
</dbReference>
<comment type="function">
    <text evidence="2">DNA ligase involved in DNA non-homologous end joining (NHEJ); required for double-strand break (DSB) repair and V(D)J recombination. Catalyzes the NHEJ ligation step of the broken DNA during DSB repair by resealing the DNA breaks after the gap filling is completed. Joins single-strand breaks in a double-stranded polydeoxynucleotide in an ATP-dependent reaction. LIG4 is mechanistically flexible: it can ligate nicks as well as compatible DNA overhangs alone, while in the presence of XRCC4, it can ligate ends with 2-nucleotides (nt) microhomology and 1-nt gaps. Forms a subcomplex with XRCC4; the LIG4-XRCC4 subcomplex is responsible for the NHEJ ligation step and XRCC4 enhances the joining activity of LIG4. Binding of the LIG4-XRCC4 complex to DNA ends is dependent on the assembly of the DNA-dependent protein kinase complex DNA-PK to these DNA ends. LIG4 regulates nuclear localization of XRCC4.</text>
</comment>
<comment type="catalytic activity">
    <reaction evidence="5">
        <text>ATP + (deoxyribonucleotide)n-3'-hydroxyl + 5'-phospho-(deoxyribonucleotide)m = (deoxyribonucleotide)n+m + AMP + diphosphate.</text>
        <dbReference type="EC" id="6.5.1.1"/>
    </reaction>
</comment>
<comment type="cofactor">
    <cofactor evidence="2">
        <name>Mg(2+)</name>
        <dbReference type="ChEBI" id="CHEBI:18420"/>
    </cofactor>
</comment>
<comment type="subunit">
    <text evidence="2">Interacts with XRCC4; the LIG4-XRCC4 subcomplex has a 1:2 stoichiometry and XRCC4 is required for LIG4 stability. Component of the core long-range non-homologous end joining (NHEJ) complex (also named DNA-PK complex) composed of PRKDC, LIG4, XRCC4, XRCC6/Ku70, XRCC5/Ku86 and NHEJ1/XLF. Additional component of the NHEJ complex includes PAXX. Following autophosphorylation, PRKDC dissociates from DNA, leading to formation of the short-range NHEJ complex, composed of LIG4, XRCC4, XRCC6/Ku70, XRCC5/Ku86 and NHEJ1/XLF. Interacts with DCLRE1C; the interaction is direct. Interacts with APLF.</text>
</comment>
<comment type="subcellular location">
    <subcellularLocation>
        <location evidence="2">Nucleus</location>
    </subcellularLocation>
</comment>
<comment type="disruption phenotype">
    <text evidence="6">Embryonic lethality associated with extensive apoptotic cell death in the embryonic central nervous system.</text>
</comment>
<comment type="similarity">
    <text evidence="8">Belongs to the ATP-dependent DNA ligase family.</text>
</comment>
<proteinExistence type="evidence at transcript level"/>
<organism>
    <name type="scientific">Mus musculus</name>
    <name type="common">Mouse</name>
    <dbReference type="NCBI Taxonomy" id="10090"/>
    <lineage>
        <taxon>Eukaryota</taxon>
        <taxon>Metazoa</taxon>
        <taxon>Chordata</taxon>
        <taxon>Craniata</taxon>
        <taxon>Vertebrata</taxon>
        <taxon>Euteleostomi</taxon>
        <taxon>Mammalia</taxon>
        <taxon>Eutheria</taxon>
        <taxon>Euarchontoglires</taxon>
        <taxon>Glires</taxon>
        <taxon>Rodentia</taxon>
        <taxon>Myomorpha</taxon>
        <taxon>Muroidea</taxon>
        <taxon>Muridae</taxon>
        <taxon>Murinae</taxon>
        <taxon>Mus</taxon>
        <taxon>Mus</taxon>
    </lineage>
</organism>
<reference key="1">
    <citation type="journal article" date="2005" name="Science">
        <title>The transcriptional landscape of the mammalian genome.</title>
        <authorList>
            <person name="Carninci P."/>
            <person name="Kasukawa T."/>
            <person name="Katayama S."/>
            <person name="Gough J."/>
            <person name="Frith M.C."/>
            <person name="Maeda N."/>
            <person name="Oyama R."/>
            <person name="Ravasi T."/>
            <person name="Lenhard B."/>
            <person name="Wells C."/>
            <person name="Kodzius R."/>
            <person name="Shimokawa K."/>
            <person name="Bajic V.B."/>
            <person name="Brenner S.E."/>
            <person name="Batalov S."/>
            <person name="Forrest A.R."/>
            <person name="Zavolan M."/>
            <person name="Davis M.J."/>
            <person name="Wilming L.G."/>
            <person name="Aidinis V."/>
            <person name="Allen J.E."/>
            <person name="Ambesi-Impiombato A."/>
            <person name="Apweiler R."/>
            <person name="Aturaliya R.N."/>
            <person name="Bailey T.L."/>
            <person name="Bansal M."/>
            <person name="Baxter L."/>
            <person name="Beisel K.W."/>
            <person name="Bersano T."/>
            <person name="Bono H."/>
            <person name="Chalk A.M."/>
            <person name="Chiu K.P."/>
            <person name="Choudhary V."/>
            <person name="Christoffels A."/>
            <person name="Clutterbuck D.R."/>
            <person name="Crowe M.L."/>
            <person name="Dalla E."/>
            <person name="Dalrymple B.P."/>
            <person name="de Bono B."/>
            <person name="Della Gatta G."/>
            <person name="di Bernardo D."/>
            <person name="Down T."/>
            <person name="Engstrom P."/>
            <person name="Fagiolini M."/>
            <person name="Faulkner G."/>
            <person name="Fletcher C.F."/>
            <person name="Fukushima T."/>
            <person name="Furuno M."/>
            <person name="Futaki S."/>
            <person name="Gariboldi M."/>
            <person name="Georgii-Hemming P."/>
            <person name="Gingeras T.R."/>
            <person name="Gojobori T."/>
            <person name="Green R.E."/>
            <person name="Gustincich S."/>
            <person name="Harbers M."/>
            <person name="Hayashi Y."/>
            <person name="Hensch T.K."/>
            <person name="Hirokawa N."/>
            <person name="Hill D."/>
            <person name="Huminiecki L."/>
            <person name="Iacono M."/>
            <person name="Ikeo K."/>
            <person name="Iwama A."/>
            <person name="Ishikawa T."/>
            <person name="Jakt M."/>
            <person name="Kanapin A."/>
            <person name="Katoh M."/>
            <person name="Kawasawa Y."/>
            <person name="Kelso J."/>
            <person name="Kitamura H."/>
            <person name="Kitano H."/>
            <person name="Kollias G."/>
            <person name="Krishnan S.P."/>
            <person name="Kruger A."/>
            <person name="Kummerfeld S.K."/>
            <person name="Kurochkin I.V."/>
            <person name="Lareau L.F."/>
            <person name="Lazarevic D."/>
            <person name="Lipovich L."/>
            <person name="Liu J."/>
            <person name="Liuni S."/>
            <person name="McWilliam S."/>
            <person name="Madan Babu M."/>
            <person name="Madera M."/>
            <person name="Marchionni L."/>
            <person name="Matsuda H."/>
            <person name="Matsuzawa S."/>
            <person name="Miki H."/>
            <person name="Mignone F."/>
            <person name="Miyake S."/>
            <person name="Morris K."/>
            <person name="Mottagui-Tabar S."/>
            <person name="Mulder N."/>
            <person name="Nakano N."/>
            <person name="Nakauchi H."/>
            <person name="Ng P."/>
            <person name="Nilsson R."/>
            <person name="Nishiguchi S."/>
            <person name="Nishikawa S."/>
            <person name="Nori F."/>
            <person name="Ohara O."/>
            <person name="Okazaki Y."/>
            <person name="Orlando V."/>
            <person name="Pang K.C."/>
            <person name="Pavan W.J."/>
            <person name="Pavesi G."/>
            <person name="Pesole G."/>
            <person name="Petrovsky N."/>
            <person name="Piazza S."/>
            <person name="Reed J."/>
            <person name="Reid J.F."/>
            <person name="Ring B.Z."/>
            <person name="Ringwald M."/>
            <person name="Rost B."/>
            <person name="Ruan Y."/>
            <person name="Salzberg S.L."/>
            <person name="Sandelin A."/>
            <person name="Schneider C."/>
            <person name="Schoenbach C."/>
            <person name="Sekiguchi K."/>
            <person name="Semple C.A."/>
            <person name="Seno S."/>
            <person name="Sessa L."/>
            <person name="Sheng Y."/>
            <person name="Shibata Y."/>
            <person name="Shimada H."/>
            <person name="Shimada K."/>
            <person name="Silva D."/>
            <person name="Sinclair B."/>
            <person name="Sperling S."/>
            <person name="Stupka E."/>
            <person name="Sugiura K."/>
            <person name="Sultana R."/>
            <person name="Takenaka Y."/>
            <person name="Taki K."/>
            <person name="Tammoja K."/>
            <person name="Tan S.L."/>
            <person name="Tang S."/>
            <person name="Taylor M.S."/>
            <person name="Tegner J."/>
            <person name="Teichmann S.A."/>
            <person name="Ueda H.R."/>
            <person name="van Nimwegen E."/>
            <person name="Verardo R."/>
            <person name="Wei C.L."/>
            <person name="Yagi K."/>
            <person name="Yamanishi H."/>
            <person name="Zabarovsky E."/>
            <person name="Zhu S."/>
            <person name="Zimmer A."/>
            <person name="Hide W."/>
            <person name="Bult C."/>
            <person name="Grimmond S.M."/>
            <person name="Teasdale R.D."/>
            <person name="Liu E.T."/>
            <person name="Brusic V."/>
            <person name="Quackenbush J."/>
            <person name="Wahlestedt C."/>
            <person name="Mattick J.S."/>
            <person name="Hume D.A."/>
            <person name="Kai C."/>
            <person name="Sasaki D."/>
            <person name="Tomaru Y."/>
            <person name="Fukuda S."/>
            <person name="Kanamori-Katayama M."/>
            <person name="Suzuki M."/>
            <person name="Aoki J."/>
            <person name="Arakawa T."/>
            <person name="Iida J."/>
            <person name="Imamura K."/>
            <person name="Itoh M."/>
            <person name="Kato T."/>
            <person name="Kawaji H."/>
            <person name="Kawagashira N."/>
            <person name="Kawashima T."/>
            <person name="Kojima M."/>
            <person name="Kondo S."/>
            <person name="Konno H."/>
            <person name="Nakano K."/>
            <person name="Ninomiya N."/>
            <person name="Nishio T."/>
            <person name="Okada M."/>
            <person name="Plessy C."/>
            <person name="Shibata K."/>
            <person name="Shiraki T."/>
            <person name="Suzuki S."/>
            <person name="Tagami M."/>
            <person name="Waki K."/>
            <person name="Watahiki A."/>
            <person name="Okamura-Oho Y."/>
            <person name="Suzuki H."/>
            <person name="Kawai J."/>
            <person name="Hayashizaki Y."/>
        </authorList>
    </citation>
    <scope>NUCLEOTIDE SEQUENCE [LARGE SCALE MRNA]</scope>
    <source>
        <strain>C57BL/6J</strain>
        <tissue>Testis</tissue>
    </source>
</reference>
<reference key="2">
    <citation type="journal article" date="2009" name="PLoS Biol.">
        <title>Lineage-specific biology revealed by a finished genome assembly of the mouse.</title>
        <authorList>
            <person name="Church D.M."/>
            <person name="Goodstadt L."/>
            <person name="Hillier L.W."/>
            <person name="Zody M.C."/>
            <person name="Goldstein S."/>
            <person name="She X."/>
            <person name="Bult C.J."/>
            <person name="Agarwala R."/>
            <person name="Cherry J.L."/>
            <person name="DiCuccio M."/>
            <person name="Hlavina W."/>
            <person name="Kapustin Y."/>
            <person name="Meric P."/>
            <person name="Maglott D."/>
            <person name="Birtle Z."/>
            <person name="Marques A.C."/>
            <person name="Graves T."/>
            <person name="Zhou S."/>
            <person name="Teague B."/>
            <person name="Potamousis K."/>
            <person name="Churas C."/>
            <person name="Place M."/>
            <person name="Herschleb J."/>
            <person name="Runnheim R."/>
            <person name="Forrest D."/>
            <person name="Amos-Landgraf J."/>
            <person name="Schwartz D.C."/>
            <person name="Cheng Z."/>
            <person name="Lindblad-Toh K."/>
            <person name="Eichler E.E."/>
            <person name="Ponting C.P."/>
        </authorList>
    </citation>
    <scope>NUCLEOTIDE SEQUENCE [LARGE SCALE GENOMIC DNA]</scope>
    <source>
        <strain>C57BL/6J</strain>
    </source>
</reference>
<reference key="3">
    <citation type="submission" date="2005-07" db="EMBL/GenBank/DDBJ databases">
        <authorList>
            <person name="Mural R.J."/>
            <person name="Adams M.D."/>
            <person name="Myers E.W."/>
            <person name="Smith H.O."/>
            <person name="Venter J.C."/>
        </authorList>
    </citation>
    <scope>NUCLEOTIDE SEQUENCE [LARGE SCALE GENOMIC DNA]</scope>
</reference>
<reference key="4">
    <citation type="journal article" date="1998" name="Curr. Biol.">
        <title>Targeted disruption of the gene encoding DNA ligase IV leads to lethality in embryonic mice.</title>
        <authorList>
            <person name="Barnes D.E."/>
            <person name="Stamp G."/>
            <person name="Rosewell I."/>
            <person name="Denzel A."/>
            <person name="Lindahl T."/>
        </authorList>
    </citation>
    <scope>DISRUPTION PHENOTYPE</scope>
</reference>
<keyword id="KW-0067">ATP-binding</keyword>
<keyword id="KW-0131">Cell cycle</keyword>
<keyword id="KW-0132">Cell division</keyword>
<keyword id="KW-0227">DNA damage</keyword>
<keyword id="KW-0233">DNA recombination</keyword>
<keyword id="KW-0234">DNA repair</keyword>
<keyword id="KW-0436">Ligase</keyword>
<keyword id="KW-0460">Magnesium</keyword>
<keyword id="KW-0479">Metal-binding</keyword>
<keyword id="KW-0547">Nucleotide-binding</keyword>
<keyword id="KW-0539">Nucleus</keyword>
<keyword id="KW-1185">Reference proteome</keyword>
<keyword id="KW-0677">Repeat</keyword>
<gene>
    <name evidence="9" type="primary">Lig4</name>
</gene>